<proteinExistence type="inferred from homology"/>
<sequence length="277" mass="30513">MKKTQQKEIENVTNITGVRQIELWRHDDLQHPRLDEVAEEVPVALVYNGISHVVMMASPKDLEYFALGFSLSEGIIESPRDIFGMDVVPSCNGLEVQIELSSRRFMGLKERRRALAGRTGCGVCGVEQLNDIGKPVQPLPFTQTFDLNKLDDALRHLNDFQPVGQLTGCTHAAAWMLPSGELVGGHEDVGRHVALDKLLGRRSQEGESWQQGAVLVSSRASYEMVQKSAMCGVEILFAVSAATTLAVEVAERCNLTLVGFCKPGRATVYTHPQRLSN</sequence>
<gene>
    <name evidence="1" type="primary">fdhD</name>
    <name type="ordered locus">ECP_4108</name>
</gene>
<name>FDHD_ECOL5</name>
<accession>Q0TAG5</accession>
<organism>
    <name type="scientific">Escherichia coli O6:K15:H31 (strain 536 / UPEC)</name>
    <dbReference type="NCBI Taxonomy" id="362663"/>
    <lineage>
        <taxon>Bacteria</taxon>
        <taxon>Pseudomonadati</taxon>
        <taxon>Pseudomonadota</taxon>
        <taxon>Gammaproteobacteria</taxon>
        <taxon>Enterobacterales</taxon>
        <taxon>Enterobacteriaceae</taxon>
        <taxon>Escherichia</taxon>
    </lineage>
</organism>
<dbReference type="EMBL" id="CP000247">
    <property type="protein sequence ID" value="ABG72064.1"/>
    <property type="molecule type" value="Genomic_DNA"/>
</dbReference>
<dbReference type="RefSeq" id="WP_000753582.1">
    <property type="nucleotide sequence ID" value="NC_008253.1"/>
</dbReference>
<dbReference type="SMR" id="Q0TAG5"/>
<dbReference type="KEGG" id="ecp:ECP_4108"/>
<dbReference type="HOGENOM" id="CLU_056887_2_0_6"/>
<dbReference type="Proteomes" id="UP000009182">
    <property type="component" value="Chromosome"/>
</dbReference>
<dbReference type="GO" id="GO:0005737">
    <property type="term" value="C:cytoplasm"/>
    <property type="evidence" value="ECO:0007669"/>
    <property type="project" value="UniProtKB-SubCell"/>
</dbReference>
<dbReference type="GO" id="GO:0097163">
    <property type="term" value="F:sulfur carrier activity"/>
    <property type="evidence" value="ECO:0007669"/>
    <property type="project" value="UniProtKB-UniRule"/>
</dbReference>
<dbReference type="GO" id="GO:0016783">
    <property type="term" value="F:sulfurtransferase activity"/>
    <property type="evidence" value="ECO:0007669"/>
    <property type="project" value="InterPro"/>
</dbReference>
<dbReference type="GO" id="GO:0006777">
    <property type="term" value="P:Mo-molybdopterin cofactor biosynthetic process"/>
    <property type="evidence" value="ECO:0007669"/>
    <property type="project" value="UniProtKB-UniRule"/>
</dbReference>
<dbReference type="FunFam" id="3.10.20.10:FF:000003">
    <property type="entry name" value="Sulfur carrier protein FdhD"/>
    <property type="match status" value="1"/>
</dbReference>
<dbReference type="FunFam" id="3.40.140.10:FF:000027">
    <property type="entry name" value="Sulfur carrier protein FdhD"/>
    <property type="match status" value="1"/>
</dbReference>
<dbReference type="Gene3D" id="3.10.20.10">
    <property type="match status" value="1"/>
</dbReference>
<dbReference type="Gene3D" id="3.40.140.10">
    <property type="entry name" value="Cytidine Deaminase, domain 2"/>
    <property type="match status" value="1"/>
</dbReference>
<dbReference type="HAMAP" id="MF_00187">
    <property type="entry name" value="FdhD"/>
    <property type="match status" value="1"/>
</dbReference>
<dbReference type="InterPro" id="IPR016193">
    <property type="entry name" value="Cytidine_deaminase-like"/>
</dbReference>
<dbReference type="InterPro" id="IPR003786">
    <property type="entry name" value="FdhD"/>
</dbReference>
<dbReference type="NCBIfam" id="TIGR00129">
    <property type="entry name" value="fdhD_narQ"/>
    <property type="match status" value="1"/>
</dbReference>
<dbReference type="PANTHER" id="PTHR30592">
    <property type="entry name" value="FORMATE DEHYDROGENASE"/>
    <property type="match status" value="1"/>
</dbReference>
<dbReference type="PANTHER" id="PTHR30592:SF1">
    <property type="entry name" value="SULFUR CARRIER PROTEIN FDHD"/>
    <property type="match status" value="1"/>
</dbReference>
<dbReference type="Pfam" id="PF02634">
    <property type="entry name" value="FdhD-NarQ"/>
    <property type="match status" value="1"/>
</dbReference>
<dbReference type="PIRSF" id="PIRSF015626">
    <property type="entry name" value="FdhD"/>
    <property type="match status" value="1"/>
</dbReference>
<dbReference type="SUPFAM" id="SSF53927">
    <property type="entry name" value="Cytidine deaminase-like"/>
    <property type="match status" value="1"/>
</dbReference>
<feature type="chain" id="PRO_1000020814" description="Sulfur carrier protein FdhD">
    <location>
        <begin position="1"/>
        <end position="277"/>
    </location>
</feature>
<feature type="active site" description="Cysteine persulfide intermediate" evidence="1">
    <location>
        <position position="121"/>
    </location>
</feature>
<feature type="binding site" evidence="1">
    <location>
        <begin position="260"/>
        <end position="265"/>
    </location>
    <ligand>
        <name>Mo-bis(molybdopterin guanine dinucleotide)</name>
        <dbReference type="ChEBI" id="CHEBI:60539"/>
    </ligand>
</feature>
<evidence type="ECO:0000255" key="1">
    <source>
        <dbReference type="HAMAP-Rule" id="MF_00187"/>
    </source>
</evidence>
<reference key="1">
    <citation type="journal article" date="2006" name="Mol. Microbiol.">
        <title>Role of pathogenicity island-associated integrases in the genome plasticity of uropathogenic Escherichia coli strain 536.</title>
        <authorList>
            <person name="Hochhut B."/>
            <person name="Wilde C."/>
            <person name="Balling G."/>
            <person name="Middendorf B."/>
            <person name="Dobrindt U."/>
            <person name="Brzuszkiewicz E."/>
            <person name="Gottschalk G."/>
            <person name="Carniel E."/>
            <person name="Hacker J."/>
        </authorList>
    </citation>
    <scope>NUCLEOTIDE SEQUENCE [LARGE SCALE GENOMIC DNA]</scope>
    <source>
        <strain>536 / UPEC</strain>
    </source>
</reference>
<protein>
    <recommendedName>
        <fullName evidence="1">Sulfur carrier protein FdhD</fullName>
    </recommendedName>
</protein>
<comment type="function">
    <text evidence="1">Required for formate dehydrogenase (FDH) activity. Acts as a sulfur carrier protein that transfers sulfur from IscS to the molybdenum cofactor prior to its insertion into FDH.</text>
</comment>
<comment type="subcellular location">
    <subcellularLocation>
        <location evidence="1">Cytoplasm</location>
    </subcellularLocation>
</comment>
<comment type="similarity">
    <text evidence="1">Belongs to the FdhD family.</text>
</comment>
<keyword id="KW-0963">Cytoplasm</keyword>
<keyword id="KW-0501">Molybdenum cofactor biosynthesis</keyword>